<organism>
    <name type="scientific">Homo sapiens</name>
    <name type="common">Human</name>
    <dbReference type="NCBI Taxonomy" id="9606"/>
    <lineage>
        <taxon>Eukaryota</taxon>
        <taxon>Metazoa</taxon>
        <taxon>Chordata</taxon>
        <taxon>Craniata</taxon>
        <taxon>Vertebrata</taxon>
        <taxon>Euteleostomi</taxon>
        <taxon>Mammalia</taxon>
        <taxon>Eutheria</taxon>
        <taxon>Euarchontoglires</taxon>
        <taxon>Primates</taxon>
        <taxon>Haplorrhini</taxon>
        <taxon>Catarrhini</taxon>
        <taxon>Hominidae</taxon>
        <taxon>Homo</taxon>
    </lineage>
</organism>
<comment type="interaction">
    <interactant intactId="EBI-724442">
        <id>P57060</id>
    </interactant>
    <interactant intactId="EBI-739789">
        <id>Q92997</id>
        <label>DVL3</label>
    </interactant>
    <organismsDiffer>false</organismsDiffer>
    <experiments>3</experiments>
</comment>
<comment type="interaction">
    <interactant intactId="EBI-724442">
        <id>P57060</id>
    </interactant>
    <interactant intactId="EBI-10197451">
        <id>P11171-2</id>
        <label>EPB41</label>
    </interactant>
    <organismsDiffer>false</organismsDiffer>
    <experiments>3</experiments>
</comment>
<comment type="interaction">
    <interactant intactId="EBI-724442">
        <id>P57060</id>
    </interactant>
    <interactant intactId="EBI-11793142">
        <id>Q96GL9</id>
        <label>FAM163A</label>
    </interactant>
    <organismsDiffer>false</organismsDiffer>
    <experiments>3</experiments>
</comment>
<comment type="interaction">
    <interactant intactId="EBI-724442">
        <id>P57060</id>
    </interactant>
    <interactant intactId="EBI-448202">
        <id>O95257</id>
        <label>GADD45G</label>
    </interactant>
    <organismsDiffer>false</organismsDiffer>
    <experiments>15</experiments>
</comment>
<comment type="interaction">
    <interactant intactId="EBI-724442">
        <id>P57060</id>
    </interactant>
    <interactant intactId="EBI-745305">
        <id>Q13422</id>
        <label>IKZF1</label>
    </interactant>
    <organismsDiffer>false</organismsDiffer>
    <experiments>4</experiments>
</comment>
<comment type="interaction">
    <interactant intactId="EBI-724442">
        <id>P57060</id>
    </interactant>
    <interactant intactId="EBI-10181113">
        <id>Q8N8K9</id>
        <label>KIAA1958</label>
    </interactant>
    <organismsDiffer>false</organismsDiffer>
    <experiments>3</experiments>
</comment>
<comment type="interaction">
    <interactant intactId="EBI-724442">
        <id>P57060</id>
    </interactant>
    <interactant intactId="EBI-10171697">
        <id>Q6A162</id>
        <label>KRT40</label>
    </interactant>
    <organismsDiffer>false</organismsDiffer>
    <experiments>6</experiments>
</comment>
<comment type="interaction">
    <interactant intactId="EBI-724442">
        <id>P57060</id>
    </interactant>
    <interactant intactId="EBI-10172290">
        <id>P60409</id>
        <label>KRTAP10-7</label>
    </interactant>
    <organismsDiffer>false</organismsDiffer>
    <experiments>3</experiments>
</comment>
<comment type="interaction">
    <interactant intactId="EBI-724442">
        <id>P57060</id>
    </interactant>
    <interactant intactId="EBI-16439278">
        <id>Q6FHY5</id>
        <label>MEOX2</label>
    </interactant>
    <organismsDiffer>false</organismsDiffer>
    <experiments>3</experiments>
</comment>
<comment type="interaction">
    <interactant intactId="EBI-724442">
        <id>P57060</id>
    </interactant>
    <interactant intactId="EBI-713786">
        <id>Q8IXK0</id>
        <label>PHC2</label>
    </interactant>
    <organismsDiffer>false</organismsDiffer>
    <experiments>3</experiments>
</comment>
<comment type="interaction">
    <interactant intactId="EBI-724442">
        <id>P57060</id>
    </interactant>
    <interactant intactId="EBI-2813981">
        <id>Q9C029</id>
        <label>TRIM7</label>
    </interactant>
    <organismsDiffer>false</organismsDiffer>
    <experiments>3</experiments>
</comment>
<comment type="tissue specificity">
    <text>Ubiquitous.</text>
</comment>
<feature type="chain" id="PRO_0000079504" description="RWD domain-containing protein 2B">
    <location>
        <begin position="1"/>
        <end position="319"/>
    </location>
</feature>
<feature type="domain" description="RWD" evidence="1">
    <location>
        <begin position="41"/>
        <end position="165"/>
    </location>
</feature>
<feature type="modified residue" description="Phosphoserine" evidence="2">
    <location>
        <position position="275"/>
    </location>
</feature>
<feature type="helix" evidence="3">
    <location>
        <begin position="34"/>
        <end position="49"/>
    </location>
</feature>
<feature type="strand" evidence="3">
    <location>
        <begin position="52"/>
        <end position="59"/>
    </location>
</feature>
<feature type="helix" evidence="3">
    <location>
        <begin position="61"/>
        <end position="73"/>
    </location>
</feature>
<feature type="strand" evidence="3">
    <location>
        <begin position="83"/>
        <end position="92"/>
    </location>
</feature>
<feature type="strand" evidence="3">
    <location>
        <begin position="98"/>
        <end position="107"/>
    </location>
</feature>
<feature type="strand" evidence="3">
    <location>
        <begin position="119"/>
        <end position="121"/>
    </location>
</feature>
<feature type="helix" evidence="3">
    <location>
        <begin position="127"/>
        <end position="143"/>
    </location>
</feature>
<feature type="helix" evidence="3">
    <location>
        <begin position="152"/>
        <end position="165"/>
    </location>
</feature>
<dbReference type="EMBL" id="Y19009">
    <property type="protein sequence ID" value="CAB88085.1"/>
    <property type="molecule type" value="mRNA"/>
</dbReference>
<dbReference type="EMBL" id="AF212232">
    <property type="protein sequence ID" value="AAK14918.1"/>
    <property type="molecule type" value="mRNA"/>
</dbReference>
<dbReference type="EMBL" id="AK000056">
    <property type="protein sequence ID" value="BAA90913.1"/>
    <property type="molecule type" value="mRNA"/>
</dbReference>
<dbReference type="EMBL" id="AL163249">
    <property type="protein sequence ID" value="CAB90431.1"/>
    <property type="molecule type" value="Genomic_DNA"/>
</dbReference>
<dbReference type="EMBL" id="BC012546">
    <property type="protein sequence ID" value="AAH12546.1"/>
    <property type="molecule type" value="mRNA"/>
</dbReference>
<dbReference type="EMBL" id="BC017912">
    <property type="protein sequence ID" value="AAH17912.1"/>
    <property type="molecule type" value="mRNA"/>
</dbReference>
<dbReference type="CCDS" id="CCDS13582.1"/>
<dbReference type="RefSeq" id="NP_058636.1">
    <property type="nucleotide sequence ID" value="NM_016940.3"/>
</dbReference>
<dbReference type="PDB" id="2DAX">
    <property type="method" value="NMR"/>
    <property type="chains" value="A=34-172"/>
</dbReference>
<dbReference type="PDBsum" id="2DAX"/>
<dbReference type="BMRB" id="P57060"/>
<dbReference type="SMR" id="P57060"/>
<dbReference type="BioGRID" id="115380">
    <property type="interactions" value="53"/>
</dbReference>
<dbReference type="FunCoup" id="P57060">
    <property type="interactions" value="27"/>
</dbReference>
<dbReference type="IntAct" id="P57060">
    <property type="interactions" value="28"/>
</dbReference>
<dbReference type="MINT" id="P57060"/>
<dbReference type="STRING" id="9606.ENSP00000418693"/>
<dbReference type="iPTMnet" id="P57060"/>
<dbReference type="PhosphoSitePlus" id="P57060"/>
<dbReference type="BioMuta" id="RWDD2B"/>
<dbReference type="DMDM" id="9972769"/>
<dbReference type="jPOST" id="P57060"/>
<dbReference type="MassIVE" id="P57060"/>
<dbReference type="PaxDb" id="9606-ENSP00000418693"/>
<dbReference type="PeptideAtlas" id="P57060"/>
<dbReference type="ProteomicsDB" id="56979"/>
<dbReference type="Pumba" id="P57060"/>
<dbReference type="Antibodypedia" id="6351">
    <property type="antibodies" value="13 antibodies from 10 providers"/>
</dbReference>
<dbReference type="DNASU" id="10069"/>
<dbReference type="Ensembl" id="ENST00000493196.2">
    <property type="protein sequence ID" value="ENSP00000418693.1"/>
    <property type="gene ID" value="ENSG00000156253.7"/>
</dbReference>
<dbReference type="Ensembl" id="ENST00000707843.1">
    <property type="protein sequence ID" value="ENSP00000516999.1"/>
    <property type="gene ID" value="ENSG00000291523.1"/>
</dbReference>
<dbReference type="GeneID" id="10069"/>
<dbReference type="KEGG" id="hsa:10069"/>
<dbReference type="MANE-Select" id="ENST00000493196.2">
    <property type="protein sequence ID" value="ENSP00000418693.1"/>
    <property type="RefSeq nucleotide sequence ID" value="NM_016940.3"/>
    <property type="RefSeq protein sequence ID" value="NP_058636.1"/>
</dbReference>
<dbReference type="UCSC" id="uc002yms.4">
    <property type="organism name" value="human"/>
</dbReference>
<dbReference type="AGR" id="HGNC:1302"/>
<dbReference type="CTD" id="10069"/>
<dbReference type="DisGeNET" id="10069"/>
<dbReference type="GeneCards" id="RWDD2B"/>
<dbReference type="HGNC" id="HGNC:1302">
    <property type="gene designation" value="RWDD2B"/>
</dbReference>
<dbReference type="HPA" id="ENSG00000156253">
    <property type="expression patterns" value="Low tissue specificity"/>
</dbReference>
<dbReference type="MIM" id="617843">
    <property type="type" value="gene"/>
</dbReference>
<dbReference type="neXtProt" id="NX_P57060"/>
<dbReference type="OpenTargets" id="ENSG00000156253"/>
<dbReference type="PharmGKB" id="PA162402318"/>
<dbReference type="VEuPathDB" id="HostDB:ENSG00000156253"/>
<dbReference type="eggNOG" id="ENOG502QR2G">
    <property type="taxonomic scope" value="Eukaryota"/>
</dbReference>
<dbReference type="GeneTree" id="ENSGT00390000007224"/>
<dbReference type="HOGENOM" id="CLU_046295_1_0_1"/>
<dbReference type="InParanoid" id="P57060"/>
<dbReference type="OMA" id="IDAYMSF"/>
<dbReference type="OrthoDB" id="432412at2759"/>
<dbReference type="PAN-GO" id="P57060">
    <property type="GO annotations" value="0 GO annotations based on evolutionary models"/>
</dbReference>
<dbReference type="PhylomeDB" id="P57060"/>
<dbReference type="TreeFam" id="TF324344"/>
<dbReference type="PathwayCommons" id="P57060"/>
<dbReference type="SignaLink" id="P57060"/>
<dbReference type="BioGRID-ORCS" id="10069">
    <property type="hits" value="8 hits in 1160 CRISPR screens"/>
</dbReference>
<dbReference type="EvolutionaryTrace" id="P57060"/>
<dbReference type="GeneWiki" id="RWDD2B"/>
<dbReference type="GenomeRNAi" id="10069"/>
<dbReference type="Pharos" id="P57060">
    <property type="development level" value="Tdark"/>
</dbReference>
<dbReference type="PRO" id="PR:P57060"/>
<dbReference type="Proteomes" id="UP000005640">
    <property type="component" value="Chromosome 21"/>
</dbReference>
<dbReference type="RNAct" id="P57060">
    <property type="molecule type" value="protein"/>
</dbReference>
<dbReference type="Bgee" id="ENSG00000156253">
    <property type="expression patterns" value="Expressed in skeletal muscle tissue of biceps brachii and 175 other cell types or tissues"/>
</dbReference>
<dbReference type="CDD" id="cd23829">
    <property type="entry name" value="RWD_RWDD2"/>
    <property type="match status" value="1"/>
</dbReference>
<dbReference type="CDD" id="cd24163">
    <property type="entry name" value="RWDD2_C"/>
    <property type="match status" value="1"/>
</dbReference>
<dbReference type="Gene3D" id="3.10.110.10">
    <property type="entry name" value="Ubiquitin Conjugating Enzyme"/>
    <property type="match status" value="1"/>
</dbReference>
<dbReference type="InterPro" id="IPR017359">
    <property type="entry name" value="Phi-like"/>
</dbReference>
<dbReference type="InterPro" id="IPR010541">
    <property type="entry name" value="Prp3_C"/>
</dbReference>
<dbReference type="InterPro" id="IPR006575">
    <property type="entry name" value="RWD_dom"/>
</dbReference>
<dbReference type="InterPro" id="IPR016135">
    <property type="entry name" value="UBQ-conjugating_enzyme/RWD"/>
</dbReference>
<dbReference type="PANTHER" id="PTHR15955">
    <property type="entry name" value="RWD DOMAIN CONTAINING PROTEIN 2"/>
    <property type="match status" value="1"/>
</dbReference>
<dbReference type="PANTHER" id="PTHR15955:SF8">
    <property type="entry name" value="RWD DOMAIN-CONTAINING PROTEIN 2B-RELATED"/>
    <property type="match status" value="1"/>
</dbReference>
<dbReference type="Pfam" id="PF06544">
    <property type="entry name" value="Prp3_C"/>
    <property type="match status" value="1"/>
</dbReference>
<dbReference type="Pfam" id="PF05773">
    <property type="entry name" value="RWD"/>
    <property type="match status" value="1"/>
</dbReference>
<dbReference type="PIRSF" id="PIRSF038021">
    <property type="entry name" value="UCP038021_RWDD2"/>
    <property type="match status" value="1"/>
</dbReference>
<dbReference type="SMART" id="SM00591">
    <property type="entry name" value="RWD"/>
    <property type="match status" value="1"/>
</dbReference>
<dbReference type="SUPFAM" id="SSF54495">
    <property type="entry name" value="UBC-like"/>
    <property type="match status" value="1"/>
</dbReference>
<dbReference type="PROSITE" id="PS50908">
    <property type="entry name" value="RWD"/>
    <property type="match status" value="1"/>
</dbReference>
<evidence type="ECO:0000255" key="1">
    <source>
        <dbReference type="PROSITE-ProRule" id="PRU00179"/>
    </source>
</evidence>
<evidence type="ECO:0007744" key="2">
    <source>
    </source>
</evidence>
<evidence type="ECO:0007829" key="3">
    <source>
        <dbReference type="PDB" id="2DAX"/>
    </source>
</evidence>
<reference key="1">
    <citation type="journal article" date="2000" name="Genomics">
        <title>Characterization of a novel gene, C21orf6, mapping to a critical region of chromosome 21q22.1 involved in the monosomy 21 phenotype and of its murine ortholog, orf5.</title>
        <authorList>
            <person name="Orti R."/>
            <person name="Rachidi M."/>
            <person name="Vialard F."/>
            <person name="Toyama K."/>
            <person name="Lopes C."/>
            <person name="Taudien S."/>
            <person name="Rosenthal A."/>
            <person name="Yaspo M.-L."/>
            <person name="Sinet P.-M."/>
            <person name="Delabar J.-M."/>
        </authorList>
    </citation>
    <scope>NUCLEOTIDE SEQUENCE [MRNA]</scope>
</reference>
<reference key="2">
    <citation type="submission" date="1999-12" db="EMBL/GenBank/DDBJ databases">
        <title>A novel gene expressed in human liver non-tumor tissues.</title>
        <authorList>
            <person name="Li Y."/>
            <person name="Wu T."/>
            <person name="Xu S."/>
            <person name="Ren S."/>
            <person name="Chen Z."/>
            <person name="Han Z."/>
        </authorList>
    </citation>
    <scope>NUCLEOTIDE SEQUENCE [LARGE SCALE MRNA]</scope>
    <source>
        <tissue>Liver</tissue>
    </source>
</reference>
<reference key="3">
    <citation type="journal article" date="2004" name="Nat. Genet.">
        <title>Complete sequencing and characterization of 21,243 full-length human cDNAs.</title>
        <authorList>
            <person name="Ota T."/>
            <person name="Suzuki Y."/>
            <person name="Nishikawa T."/>
            <person name="Otsuki T."/>
            <person name="Sugiyama T."/>
            <person name="Irie R."/>
            <person name="Wakamatsu A."/>
            <person name="Hayashi K."/>
            <person name="Sato H."/>
            <person name="Nagai K."/>
            <person name="Kimura K."/>
            <person name="Makita H."/>
            <person name="Sekine M."/>
            <person name="Obayashi M."/>
            <person name="Nishi T."/>
            <person name="Shibahara T."/>
            <person name="Tanaka T."/>
            <person name="Ishii S."/>
            <person name="Yamamoto J."/>
            <person name="Saito K."/>
            <person name="Kawai Y."/>
            <person name="Isono Y."/>
            <person name="Nakamura Y."/>
            <person name="Nagahari K."/>
            <person name="Murakami K."/>
            <person name="Yasuda T."/>
            <person name="Iwayanagi T."/>
            <person name="Wagatsuma M."/>
            <person name="Shiratori A."/>
            <person name="Sudo H."/>
            <person name="Hosoiri T."/>
            <person name="Kaku Y."/>
            <person name="Kodaira H."/>
            <person name="Kondo H."/>
            <person name="Sugawara M."/>
            <person name="Takahashi M."/>
            <person name="Kanda K."/>
            <person name="Yokoi T."/>
            <person name="Furuya T."/>
            <person name="Kikkawa E."/>
            <person name="Omura Y."/>
            <person name="Abe K."/>
            <person name="Kamihara K."/>
            <person name="Katsuta N."/>
            <person name="Sato K."/>
            <person name="Tanikawa M."/>
            <person name="Yamazaki M."/>
            <person name="Ninomiya K."/>
            <person name="Ishibashi T."/>
            <person name="Yamashita H."/>
            <person name="Murakawa K."/>
            <person name="Fujimori K."/>
            <person name="Tanai H."/>
            <person name="Kimata M."/>
            <person name="Watanabe M."/>
            <person name="Hiraoka S."/>
            <person name="Chiba Y."/>
            <person name="Ishida S."/>
            <person name="Ono Y."/>
            <person name="Takiguchi S."/>
            <person name="Watanabe S."/>
            <person name="Yosida M."/>
            <person name="Hotuta T."/>
            <person name="Kusano J."/>
            <person name="Kanehori K."/>
            <person name="Takahashi-Fujii A."/>
            <person name="Hara H."/>
            <person name="Tanase T.-O."/>
            <person name="Nomura Y."/>
            <person name="Togiya S."/>
            <person name="Komai F."/>
            <person name="Hara R."/>
            <person name="Takeuchi K."/>
            <person name="Arita M."/>
            <person name="Imose N."/>
            <person name="Musashino K."/>
            <person name="Yuuki H."/>
            <person name="Oshima A."/>
            <person name="Sasaki N."/>
            <person name="Aotsuka S."/>
            <person name="Yoshikawa Y."/>
            <person name="Matsunawa H."/>
            <person name="Ichihara T."/>
            <person name="Shiohata N."/>
            <person name="Sano S."/>
            <person name="Moriya S."/>
            <person name="Momiyama H."/>
            <person name="Satoh N."/>
            <person name="Takami S."/>
            <person name="Terashima Y."/>
            <person name="Suzuki O."/>
            <person name="Nakagawa S."/>
            <person name="Senoh A."/>
            <person name="Mizoguchi H."/>
            <person name="Goto Y."/>
            <person name="Shimizu F."/>
            <person name="Wakebe H."/>
            <person name="Hishigaki H."/>
            <person name="Watanabe T."/>
            <person name="Sugiyama A."/>
            <person name="Takemoto M."/>
            <person name="Kawakami B."/>
            <person name="Yamazaki M."/>
            <person name="Watanabe K."/>
            <person name="Kumagai A."/>
            <person name="Itakura S."/>
            <person name="Fukuzumi Y."/>
            <person name="Fujimori Y."/>
            <person name="Komiyama M."/>
            <person name="Tashiro H."/>
            <person name="Tanigami A."/>
            <person name="Fujiwara T."/>
            <person name="Ono T."/>
            <person name="Yamada K."/>
            <person name="Fujii Y."/>
            <person name="Ozaki K."/>
            <person name="Hirao M."/>
            <person name="Ohmori Y."/>
            <person name="Kawabata A."/>
            <person name="Hikiji T."/>
            <person name="Kobatake N."/>
            <person name="Inagaki H."/>
            <person name="Ikema Y."/>
            <person name="Okamoto S."/>
            <person name="Okitani R."/>
            <person name="Kawakami T."/>
            <person name="Noguchi S."/>
            <person name="Itoh T."/>
            <person name="Shigeta K."/>
            <person name="Senba T."/>
            <person name="Matsumura K."/>
            <person name="Nakajima Y."/>
            <person name="Mizuno T."/>
            <person name="Morinaga M."/>
            <person name="Sasaki M."/>
            <person name="Togashi T."/>
            <person name="Oyama M."/>
            <person name="Hata H."/>
            <person name="Watanabe M."/>
            <person name="Komatsu T."/>
            <person name="Mizushima-Sugano J."/>
            <person name="Satoh T."/>
            <person name="Shirai Y."/>
            <person name="Takahashi Y."/>
            <person name="Nakagawa K."/>
            <person name="Okumura K."/>
            <person name="Nagase T."/>
            <person name="Nomura N."/>
            <person name="Kikuchi H."/>
            <person name="Masuho Y."/>
            <person name="Yamashita R."/>
            <person name="Nakai K."/>
            <person name="Yada T."/>
            <person name="Nakamura Y."/>
            <person name="Ohara O."/>
            <person name="Isogai T."/>
            <person name="Sugano S."/>
        </authorList>
    </citation>
    <scope>NUCLEOTIDE SEQUENCE [LARGE SCALE MRNA]</scope>
    <source>
        <tissue>Colon</tissue>
    </source>
</reference>
<reference key="4">
    <citation type="journal article" date="2000" name="Nature">
        <title>The DNA sequence of human chromosome 21.</title>
        <authorList>
            <person name="Hattori M."/>
            <person name="Fujiyama A."/>
            <person name="Taylor T.D."/>
            <person name="Watanabe H."/>
            <person name="Yada T."/>
            <person name="Park H.-S."/>
            <person name="Toyoda A."/>
            <person name="Ishii K."/>
            <person name="Totoki Y."/>
            <person name="Choi D.-K."/>
            <person name="Groner Y."/>
            <person name="Soeda E."/>
            <person name="Ohki M."/>
            <person name="Takagi T."/>
            <person name="Sakaki Y."/>
            <person name="Taudien S."/>
            <person name="Blechschmidt K."/>
            <person name="Polley A."/>
            <person name="Menzel U."/>
            <person name="Delabar J."/>
            <person name="Kumpf K."/>
            <person name="Lehmann R."/>
            <person name="Patterson D."/>
            <person name="Reichwald K."/>
            <person name="Rump A."/>
            <person name="Schillhabel M."/>
            <person name="Schudy A."/>
            <person name="Zimmermann W."/>
            <person name="Rosenthal A."/>
            <person name="Kudoh J."/>
            <person name="Shibuya K."/>
            <person name="Kawasaki K."/>
            <person name="Asakawa S."/>
            <person name="Shintani A."/>
            <person name="Sasaki T."/>
            <person name="Nagamine K."/>
            <person name="Mitsuyama S."/>
            <person name="Antonarakis S.E."/>
            <person name="Minoshima S."/>
            <person name="Shimizu N."/>
            <person name="Nordsiek G."/>
            <person name="Hornischer K."/>
            <person name="Brandt P."/>
            <person name="Scharfe M."/>
            <person name="Schoen O."/>
            <person name="Desario A."/>
            <person name="Reichelt J."/>
            <person name="Kauer G."/>
            <person name="Bloecker H."/>
            <person name="Ramser J."/>
            <person name="Beck A."/>
            <person name="Klages S."/>
            <person name="Hennig S."/>
            <person name="Riesselmann L."/>
            <person name="Dagand E."/>
            <person name="Wehrmeyer S."/>
            <person name="Borzym K."/>
            <person name="Gardiner K."/>
            <person name="Nizetic D."/>
            <person name="Francis F."/>
            <person name="Lehrach H."/>
            <person name="Reinhardt R."/>
            <person name="Yaspo M.-L."/>
        </authorList>
    </citation>
    <scope>NUCLEOTIDE SEQUENCE [LARGE SCALE GENOMIC DNA]</scope>
</reference>
<reference key="5">
    <citation type="journal article" date="2004" name="Genome Res.">
        <title>The status, quality, and expansion of the NIH full-length cDNA project: the Mammalian Gene Collection (MGC).</title>
        <authorList>
            <consortium name="The MGC Project Team"/>
        </authorList>
    </citation>
    <scope>NUCLEOTIDE SEQUENCE [LARGE SCALE MRNA]</scope>
    <source>
        <tissue>Skeletal muscle</tissue>
    </source>
</reference>
<reference key="6">
    <citation type="journal article" date="2008" name="Proc. Natl. Acad. Sci. U.S.A.">
        <title>A quantitative atlas of mitotic phosphorylation.</title>
        <authorList>
            <person name="Dephoure N."/>
            <person name="Zhou C."/>
            <person name="Villen J."/>
            <person name="Beausoleil S.A."/>
            <person name="Bakalarski C.E."/>
            <person name="Elledge S.J."/>
            <person name="Gygi S.P."/>
        </authorList>
    </citation>
    <scope>IDENTIFICATION BY MASS SPECTROMETRY [LARGE SCALE ANALYSIS]</scope>
    <source>
        <tissue>Cervix carcinoma</tissue>
    </source>
</reference>
<reference key="7">
    <citation type="journal article" date="2010" name="Sci. Signal.">
        <title>Quantitative phosphoproteomics reveals widespread full phosphorylation site occupancy during mitosis.</title>
        <authorList>
            <person name="Olsen J.V."/>
            <person name="Vermeulen M."/>
            <person name="Santamaria A."/>
            <person name="Kumar C."/>
            <person name="Miller M.L."/>
            <person name="Jensen L.J."/>
            <person name="Gnad F."/>
            <person name="Cox J."/>
            <person name="Jensen T.S."/>
            <person name="Nigg E.A."/>
            <person name="Brunak S."/>
            <person name="Mann M."/>
        </authorList>
    </citation>
    <scope>IDENTIFICATION BY MASS SPECTROMETRY [LARGE SCALE ANALYSIS]</scope>
    <source>
        <tissue>Cervix carcinoma</tissue>
    </source>
</reference>
<reference key="8">
    <citation type="journal article" date="2013" name="J. Proteome Res.">
        <title>Toward a comprehensive characterization of a human cancer cell phosphoproteome.</title>
        <authorList>
            <person name="Zhou H."/>
            <person name="Di Palma S."/>
            <person name="Preisinger C."/>
            <person name="Peng M."/>
            <person name="Polat A.N."/>
            <person name="Heck A.J."/>
            <person name="Mohammed S."/>
        </authorList>
    </citation>
    <scope>IDENTIFICATION BY MASS SPECTROMETRY [LARGE SCALE ANALYSIS]</scope>
    <source>
        <tissue>Cervix carcinoma</tissue>
        <tissue>Erythroleukemia</tissue>
    </source>
</reference>
<reference key="9">
    <citation type="journal article" date="2014" name="J. Proteomics">
        <title>An enzyme assisted RP-RPLC approach for in-depth analysis of human liver phosphoproteome.</title>
        <authorList>
            <person name="Bian Y."/>
            <person name="Song C."/>
            <person name="Cheng K."/>
            <person name="Dong M."/>
            <person name="Wang F."/>
            <person name="Huang J."/>
            <person name="Sun D."/>
            <person name="Wang L."/>
            <person name="Ye M."/>
            <person name="Zou H."/>
        </authorList>
    </citation>
    <scope>PHOSPHORYLATION [LARGE SCALE ANALYSIS] AT SER-275</scope>
    <scope>IDENTIFICATION BY MASS SPECTROMETRY [LARGE SCALE ANALYSIS]</scope>
    <source>
        <tissue>Liver</tissue>
    </source>
</reference>
<reference key="10">
    <citation type="submission" date="2006-06" db="PDB data bank">
        <title>Solution structure of the RWD domain of human protein C21orf6.</title>
        <authorList>
            <consortium name="RIKEN structural genomics initiative (RSGI)"/>
        </authorList>
    </citation>
    <scope>STRUCTURE BY NMR OF 34-173</scope>
</reference>
<gene>
    <name type="primary">RWDD2B</name>
    <name type="synonym">C21orf6</name>
    <name type="ORF">GL011</name>
</gene>
<proteinExistence type="evidence at protein level"/>
<accession>P57060</accession>
<keyword id="KW-0002">3D-structure</keyword>
<keyword id="KW-0597">Phosphoprotein</keyword>
<keyword id="KW-1267">Proteomics identification</keyword>
<keyword id="KW-1185">Reference proteome</keyword>
<sequence>MKIELSMQPWNPGYSSEGATAQETYTCPKMIEMEQAEAQLAELDLLASMFPGENELIVNDQLAVAELKDCIEKKTMEGRSSKVYFTINMNLDVSDEKMAMFSLACILPFKYPAVLPEITVRSVLLSRSQQTQLNTDLTAFLQKHCHGDVCILNATEWVREHASGYVSRDTSSSPTTGSTVQSVDLIFTRLWIYSHHIYNKCKRKNILEWAKELSLSGFSMPGKPGVVCVEGPQSACEEFWSRLRKLNWKRILIRHREDIPFDGTNDETERQRKFSIFEEKVFSVNGARGNHMDFGQLYQFLNTKGCGDVFQMFFGVEGQ</sequence>
<name>RWD2B_HUMAN</name>
<protein>
    <recommendedName>
        <fullName>RWD domain-containing protein 2B</fullName>
    </recommendedName>
</protein>